<name>DISA_KINRD</name>
<dbReference type="EC" id="2.7.7.85" evidence="1"/>
<dbReference type="EMBL" id="CP000750">
    <property type="protein sequence ID" value="ABS02091.1"/>
    <property type="molecule type" value="Genomic_DNA"/>
</dbReference>
<dbReference type="RefSeq" id="WP_012085069.1">
    <property type="nucleotide sequence ID" value="NC_009664.2"/>
</dbReference>
<dbReference type="SMR" id="A6W5K2"/>
<dbReference type="STRING" id="266940.Krad_0602"/>
<dbReference type="KEGG" id="kra:Krad_0602"/>
<dbReference type="eggNOG" id="COG1623">
    <property type="taxonomic scope" value="Bacteria"/>
</dbReference>
<dbReference type="HOGENOM" id="CLU_787128_0_0_11"/>
<dbReference type="OrthoDB" id="41841at2"/>
<dbReference type="Proteomes" id="UP000001116">
    <property type="component" value="Chromosome"/>
</dbReference>
<dbReference type="GO" id="GO:0004016">
    <property type="term" value="F:adenylate cyclase activity"/>
    <property type="evidence" value="ECO:0007669"/>
    <property type="project" value="TreeGrafter"/>
</dbReference>
<dbReference type="GO" id="GO:0005524">
    <property type="term" value="F:ATP binding"/>
    <property type="evidence" value="ECO:0007669"/>
    <property type="project" value="UniProtKB-UniRule"/>
</dbReference>
<dbReference type="GO" id="GO:0140097">
    <property type="term" value="F:catalytic activity, acting on DNA"/>
    <property type="evidence" value="ECO:0007669"/>
    <property type="project" value="UniProtKB-ARBA"/>
</dbReference>
<dbReference type="GO" id="GO:0106408">
    <property type="term" value="F:diadenylate cyclase activity"/>
    <property type="evidence" value="ECO:0007669"/>
    <property type="project" value="UniProtKB-EC"/>
</dbReference>
<dbReference type="GO" id="GO:0003677">
    <property type="term" value="F:DNA binding"/>
    <property type="evidence" value="ECO:0007669"/>
    <property type="project" value="UniProtKB-UniRule"/>
</dbReference>
<dbReference type="GO" id="GO:0016787">
    <property type="term" value="F:hydrolase activity"/>
    <property type="evidence" value="ECO:0007669"/>
    <property type="project" value="UniProtKB-ARBA"/>
</dbReference>
<dbReference type="GO" id="GO:0006281">
    <property type="term" value="P:DNA repair"/>
    <property type="evidence" value="ECO:0007669"/>
    <property type="project" value="UniProtKB-UniRule"/>
</dbReference>
<dbReference type="FunFam" id="1.20.1260.110:FF:000002">
    <property type="entry name" value="DNA integrity scanning protein DisA"/>
    <property type="match status" value="1"/>
</dbReference>
<dbReference type="FunFam" id="3.40.1700.10:FF:000001">
    <property type="entry name" value="DNA integrity scanning protein DisA"/>
    <property type="match status" value="1"/>
</dbReference>
<dbReference type="Gene3D" id="1.10.150.20">
    <property type="entry name" value="5' to 3' exonuclease, C-terminal subdomain"/>
    <property type="match status" value="1"/>
</dbReference>
<dbReference type="Gene3D" id="1.20.1260.110">
    <property type="entry name" value="DNA integrity scanning linker region"/>
    <property type="match status" value="1"/>
</dbReference>
<dbReference type="Gene3D" id="3.40.1700.10">
    <property type="entry name" value="DNA integrity scanning protein, DisA, N-terminal domain"/>
    <property type="match status" value="1"/>
</dbReference>
<dbReference type="HAMAP" id="MF_01438">
    <property type="entry name" value="DisA"/>
    <property type="match status" value="1"/>
</dbReference>
<dbReference type="InterPro" id="IPR050338">
    <property type="entry name" value="DisA"/>
</dbReference>
<dbReference type="InterPro" id="IPR038331">
    <property type="entry name" value="DisA_sf"/>
</dbReference>
<dbReference type="InterPro" id="IPR036888">
    <property type="entry name" value="DNA_integrity_DisA_N_sf"/>
</dbReference>
<dbReference type="InterPro" id="IPR018906">
    <property type="entry name" value="DNA_integrity_scan_DisA_link"/>
</dbReference>
<dbReference type="InterPro" id="IPR003390">
    <property type="entry name" value="DNA_integrity_scan_DisA_N"/>
</dbReference>
<dbReference type="InterPro" id="IPR023763">
    <property type="entry name" value="DNA_integrity_scanning_protein"/>
</dbReference>
<dbReference type="InterPro" id="IPR000445">
    <property type="entry name" value="HhH_motif"/>
</dbReference>
<dbReference type="InterPro" id="IPR010994">
    <property type="entry name" value="RuvA_2-like"/>
</dbReference>
<dbReference type="NCBIfam" id="NF010009">
    <property type="entry name" value="PRK13482.1"/>
    <property type="match status" value="1"/>
</dbReference>
<dbReference type="PANTHER" id="PTHR34185">
    <property type="entry name" value="DIADENYLATE CYCLASE"/>
    <property type="match status" value="1"/>
</dbReference>
<dbReference type="PANTHER" id="PTHR34185:SF3">
    <property type="entry name" value="DNA INTEGRITY SCANNING PROTEIN DISA"/>
    <property type="match status" value="1"/>
</dbReference>
<dbReference type="Pfam" id="PF02457">
    <property type="entry name" value="DAC"/>
    <property type="match status" value="1"/>
</dbReference>
<dbReference type="Pfam" id="PF10635">
    <property type="entry name" value="DisA-linker"/>
    <property type="match status" value="1"/>
</dbReference>
<dbReference type="Pfam" id="PF00633">
    <property type="entry name" value="HHH"/>
    <property type="match status" value="1"/>
</dbReference>
<dbReference type="SUPFAM" id="SSF47781">
    <property type="entry name" value="RuvA domain 2-like"/>
    <property type="match status" value="1"/>
</dbReference>
<dbReference type="SUPFAM" id="SSF143597">
    <property type="entry name" value="YojJ-like"/>
    <property type="match status" value="1"/>
</dbReference>
<dbReference type="PROSITE" id="PS51794">
    <property type="entry name" value="DAC"/>
    <property type="match status" value="1"/>
</dbReference>
<organism>
    <name type="scientific">Kineococcus radiotolerans (strain ATCC BAA-149 / DSM 14245 / SRS30216)</name>
    <dbReference type="NCBI Taxonomy" id="266940"/>
    <lineage>
        <taxon>Bacteria</taxon>
        <taxon>Bacillati</taxon>
        <taxon>Actinomycetota</taxon>
        <taxon>Actinomycetes</taxon>
        <taxon>Kineosporiales</taxon>
        <taxon>Kineosporiaceae</taxon>
        <taxon>Kineococcus</taxon>
    </lineage>
</organism>
<accession>A6W5K2</accession>
<keyword id="KW-0067">ATP-binding</keyword>
<keyword id="KW-0227">DNA damage</keyword>
<keyword id="KW-0234">DNA repair</keyword>
<keyword id="KW-0238">DNA-binding</keyword>
<keyword id="KW-0460">Magnesium</keyword>
<keyword id="KW-0547">Nucleotide-binding</keyword>
<keyword id="KW-0548">Nucleotidyltransferase</keyword>
<keyword id="KW-1185">Reference proteome</keyword>
<keyword id="KW-0808">Transferase</keyword>
<sequence>MPDRTPDEVLRQTLAILAPGTDLRDGLERILRGRTGALIVLGFDRVVDSLSTGGFALDVEFSATRLRELAKMDGAIVLDRDVSRIVRAAVQLVPDSSIETSESGTRHRTAERVAKQTGFPVISVSQSMRIVAVYTGNRRYVLEGSDAILGRANQALQTLERYRARLDEVTGTLSALEIEDLVTVRDVCSVVQRIEMVSRIADEISGYVVELGVDGRLLSLQLDELVGGVGPDRELVVRDYLEASRYEGPLEAVLESLAGLHQSDLVDLSQVARVLGFSVGGDSLDSAVSPKGFRLLNRVPRLPGAIVERLVDQFGDLQKLLAASIDDLMTVDGVGEQRARAVREGLSRLAESSILERYV</sequence>
<gene>
    <name evidence="1" type="primary">disA</name>
    <name type="ordered locus">Krad_0602</name>
</gene>
<protein>
    <recommendedName>
        <fullName evidence="1">DNA integrity scanning protein DisA</fullName>
    </recommendedName>
    <alternativeName>
        <fullName evidence="1">Cyclic di-AMP synthase</fullName>
        <shortName evidence="1">c-di-AMP synthase</shortName>
    </alternativeName>
    <alternativeName>
        <fullName evidence="1">Diadenylate cyclase</fullName>
        <ecNumber evidence="1">2.7.7.85</ecNumber>
    </alternativeName>
</protein>
<evidence type="ECO:0000255" key="1">
    <source>
        <dbReference type="HAMAP-Rule" id="MF_01438"/>
    </source>
</evidence>
<evidence type="ECO:0000255" key="2">
    <source>
        <dbReference type="PROSITE-ProRule" id="PRU01130"/>
    </source>
</evidence>
<comment type="function">
    <text evidence="1">Participates in a DNA-damage check-point. DisA forms globular foci that rapidly scan along the chromosomes searching for lesions.</text>
</comment>
<comment type="function">
    <text evidence="1">Also has diadenylate cyclase activity, catalyzing the condensation of 2 ATP molecules into cyclic di-AMP (c-di-AMP). c-di-AMP likely acts as a signaling molecule that may couple DNA integrity with a cellular process.</text>
</comment>
<comment type="catalytic activity">
    <reaction evidence="1">
        <text>2 ATP = 3',3'-c-di-AMP + 2 diphosphate</text>
        <dbReference type="Rhea" id="RHEA:35655"/>
        <dbReference type="ChEBI" id="CHEBI:30616"/>
        <dbReference type="ChEBI" id="CHEBI:33019"/>
        <dbReference type="ChEBI" id="CHEBI:71500"/>
        <dbReference type="EC" id="2.7.7.85"/>
    </reaction>
</comment>
<comment type="cofactor">
    <cofactor evidence="1">
        <name>Mg(2+)</name>
        <dbReference type="ChEBI" id="CHEBI:18420"/>
    </cofactor>
</comment>
<comment type="subunit">
    <text evidence="1">Homooctamer.</text>
</comment>
<comment type="similarity">
    <text evidence="1">Belongs to the DisA family.</text>
</comment>
<feature type="chain" id="PRO_1000087447" description="DNA integrity scanning protein DisA">
    <location>
        <begin position="1"/>
        <end position="359"/>
    </location>
</feature>
<feature type="domain" description="DAC" evidence="2">
    <location>
        <begin position="7"/>
        <end position="146"/>
    </location>
</feature>
<feature type="binding site" evidence="1">
    <location>
        <position position="74"/>
    </location>
    <ligand>
        <name>ATP</name>
        <dbReference type="ChEBI" id="CHEBI:30616"/>
    </ligand>
</feature>
<feature type="binding site" evidence="1">
    <location>
        <position position="92"/>
    </location>
    <ligand>
        <name>ATP</name>
        <dbReference type="ChEBI" id="CHEBI:30616"/>
    </ligand>
</feature>
<feature type="binding site" evidence="1">
    <location>
        <begin position="105"/>
        <end position="109"/>
    </location>
    <ligand>
        <name>ATP</name>
        <dbReference type="ChEBI" id="CHEBI:30616"/>
    </ligand>
</feature>
<proteinExistence type="inferred from homology"/>
<reference key="1">
    <citation type="journal article" date="2008" name="PLoS ONE">
        <title>Survival in nuclear waste, extreme resistance, and potential applications gleaned from the genome sequence of Kineococcus radiotolerans SRS30216.</title>
        <authorList>
            <person name="Bagwell C.E."/>
            <person name="Bhat S."/>
            <person name="Hawkins G.M."/>
            <person name="Smith B.W."/>
            <person name="Biswas T."/>
            <person name="Hoover T.R."/>
            <person name="Saunders E."/>
            <person name="Han C.S."/>
            <person name="Tsodikov O.V."/>
            <person name="Shimkets L.J."/>
        </authorList>
    </citation>
    <scope>NUCLEOTIDE SEQUENCE [LARGE SCALE GENOMIC DNA]</scope>
    <source>
        <strain>ATCC BAA-149 / DSM 14245 / SRS30216</strain>
    </source>
</reference>